<protein>
    <recommendedName>
        <fullName evidence="2">Large ribosomal subunit protein uL1c</fullName>
    </recommendedName>
    <alternativeName>
        <fullName>50S ribosomal protein L1, chloroplastic</fullName>
    </alternativeName>
</protein>
<accession>Q85G11</accession>
<proteinExistence type="inferred from homology"/>
<geneLocation type="chloroplast"/>
<gene>
    <name type="primary">rpl1</name>
</gene>
<organism>
    <name type="scientific">Cyanidioschyzon merolae (strain NIES-3377 / 10D)</name>
    <name type="common">Unicellular red alga</name>
    <dbReference type="NCBI Taxonomy" id="280699"/>
    <lineage>
        <taxon>Eukaryota</taxon>
        <taxon>Rhodophyta</taxon>
        <taxon>Bangiophyceae</taxon>
        <taxon>Cyanidiales</taxon>
        <taxon>Cyanidiaceae</taxon>
        <taxon>Cyanidioschyzon</taxon>
    </lineage>
</organism>
<dbReference type="EMBL" id="AB002583">
    <property type="protein sequence ID" value="BAC76180.1"/>
    <property type="molecule type" value="Genomic_DNA"/>
</dbReference>
<dbReference type="RefSeq" id="NP_849018.1">
    <property type="nucleotide sequence ID" value="NC_004799.1"/>
</dbReference>
<dbReference type="SMR" id="Q85G11"/>
<dbReference type="STRING" id="280699.Q85G11"/>
<dbReference type="EnsemblPlants" id="CMV103CT">
    <property type="protein sequence ID" value="CMV103CT"/>
    <property type="gene ID" value="CMV103C"/>
</dbReference>
<dbReference type="GeneID" id="844967"/>
<dbReference type="Gramene" id="CMV103CT">
    <property type="protein sequence ID" value="CMV103CT"/>
    <property type="gene ID" value="CMV103C"/>
</dbReference>
<dbReference type="KEGG" id="cme:CymeCp086"/>
<dbReference type="eggNOG" id="KOG1569">
    <property type="taxonomic scope" value="Eukaryota"/>
</dbReference>
<dbReference type="HOGENOM" id="CLU_062853_0_0_1"/>
<dbReference type="Proteomes" id="UP000007014">
    <property type="component" value="Chloroplast"/>
</dbReference>
<dbReference type="GO" id="GO:0009507">
    <property type="term" value="C:chloroplast"/>
    <property type="evidence" value="ECO:0007669"/>
    <property type="project" value="UniProtKB-SubCell"/>
</dbReference>
<dbReference type="GO" id="GO:0015934">
    <property type="term" value="C:large ribosomal subunit"/>
    <property type="evidence" value="ECO:0007669"/>
    <property type="project" value="InterPro"/>
</dbReference>
<dbReference type="GO" id="GO:0019843">
    <property type="term" value="F:rRNA binding"/>
    <property type="evidence" value="ECO:0007669"/>
    <property type="project" value="UniProtKB-UniRule"/>
</dbReference>
<dbReference type="GO" id="GO:0003735">
    <property type="term" value="F:structural constituent of ribosome"/>
    <property type="evidence" value="ECO:0007669"/>
    <property type="project" value="InterPro"/>
</dbReference>
<dbReference type="GO" id="GO:0006412">
    <property type="term" value="P:translation"/>
    <property type="evidence" value="ECO:0007669"/>
    <property type="project" value="UniProtKB-UniRule"/>
</dbReference>
<dbReference type="CDD" id="cd00403">
    <property type="entry name" value="Ribosomal_L1"/>
    <property type="match status" value="1"/>
</dbReference>
<dbReference type="FunFam" id="3.40.50.790:FF:000001">
    <property type="entry name" value="50S ribosomal protein L1"/>
    <property type="match status" value="1"/>
</dbReference>
<dbReference type="Gene3D" id="3.30.190.20">
    <property type="match status" value="1"/>
</dbReference>
<dbReference type="Gene3D" id="3.40.50.790">
    <property type="match status" value="1"/>
</dbReference>
<dbReference type="HAMAP" id="MF_01318_B">
    <property type="entry name" value="Ribosomal_uL1_B"/>
    <property type="match status" value="1"/>
</dbReference>
<dbReference type="InterPro" id="IPR005878">
    <property type="entry name" value="Ribosom_uL1_bac-type"/>
</dbReference>
<dbReference type="InterPro" id="IPR002143">
    <property type="entry name" value="Ribosomal_uL1"/>
</dbReference>
<dbReference type="InterPro" id="IPR023674">
    <property type="entry name" value="Ribosomal_uL1-like"/>
</dbReference>
<dbReference type="InterPro" id="IPR028364">
    <property type="entry name" value="Ribosomal_uL1/biogenesis"/>
</dbReference>
<dbReference type="InterPro" id="IPR016095">
    <property type="entry name" value="Ribosomal_uL1_3-a/b-sand"/>
</dbReference>
<dbReference type="InterPro" id="IPR023673">
    <property type="entry name" value="Ribosomal_uL1_CS"/>
</dbReference>
<dbReference type="NCBIfam" id="TIGR01169">
    <property type="entry name" value="rplA_bact"/>
    <property type="match status" value="1"/>
</dbReference>
<dbReference type="PANTHER" id="PTHR36427">
    <property type="entry name" value="54S RIBOSOMAL PROTEIN L1, MITOCHONDRIAL"/>
    <property type="match status" value="1"/>
</dbReference>
<dbReference type="PANTHER" id="PTHR36427:SF3">
    <property type="entry name" value="LARGE RIBOSOMAL SUBUNIT PROTEIN UL1M"/>
    <property type="match status" value="1"/>
</dbReference>
<dbReference type="Pfam" id="PF00687">
    <property type="entry name" value="Ribosomal_L1"/>
    <property type="match status" value="1"/>
</dbReference>
<dbReference type="PIRSF" id="PIRSF002155">
    <property type="entry name" value="Ribosomal_L1"/>
    <property type="match status" value="1"/>
</dbReference>
<dbReference type="SUPFAM" id="SSF56808">
    <property type="entry name" value="Ribosomal protein L1"/>
    <property type="match status" value="1"/>
</dbReference>
<dbReference type="PROSITE" id="PS01199">
    <property type="entry name" value="RIBOSOMAL_L1"/>
    <property type="match status" value="1"/>
</dbReference>
<name>RK1_CYAM1</name>
<reference key="1">
    <citation type="journal article" date="2003" name="DNA Res.">
        <title>Complete sequence and analysis of the plastid genome of the unicellular red alga Cyanidioschyzon merolae.</title>
        <authorList>
            <person name="Ohta N."/>
            <person name="Matsuzaki M."/>
            <person name="Misumi O."/>
            <person name="Miyagishima S.-Y."/>
            <person name="Nozaki H."/>
            <person name="Tanaka K."/>
            <person name="Shin-i T."/>
            <person name="Kohara Y."/>
            <person name="Kuroiwa T."/>
        </authorList>
    </citation>
    <scope>NUCLEOTIDE SEQUENCE [LARGE SCALE GENOMIC DNA]</scope>
    <source>
        <strain>NIES-3377 / 10D</strain>
    </source>
</reference>
<feature type="chain" id="PRO_0000125786" description="Large ribosomal subunit protein uL1c">
    <location>
        <begin position="1"/>
        <end position="224"/>
    </location>
</feature>
<keyword id="KW-0150">Chloroplast</keyword>
<keyword id="KW-0934">Plastid</keyword>
<keyword id="KW-1185">Reference proteome</keyword>
<keyword id="KW-0687">Ribonucleoprotein</keyword>
<keyword id="KW-0689">Ribosomal protein</keyword>
<keyword id="KW-0694">RNA-binding</keyword>
<keyword id="KW-0699">rRNA-binding</keyword>
<evidence type="ECO:0000250" key="1"/>
<evidence type="ECO:0000305" key="2"/>
<sequence length="224" mass="24728">MKRSKRYQSLCSLIEPKLYSPQEALKLLKKLATAKFVETAEAHIRLNLDPKYTDQQIRATVVLPHGTGKAIRIAVITKQSSHIEGADLVGSDDLCAQIAQSIINFDCLIATPDMMPTLAKLGKILGPRGLMPSPKSGTVTTNVAEAIQAFRRGQIEYRTDKTGIVHLAFGRMDFNEQHLYDNLVAIKESVETNKPSGASGLYWKSFAIATSMSPSIRLNIQQWS</sequence>
<comment type="function">
    <text evidence="2">Binds directly to 23S rRNA. Might be involved in E site tRNA release (Potential).</text>
</comment>
<comment type="subunit">
    <text evidence="1">Part of the 50S ribosomal subunit.</text>
</comment>
<comment type="subcellular location">
    <subcellularLocation>
        <location>Plastid</location>
        <location>Chloroplast</location>
    </subcellularLocation>
</comment>
<comment type="similarity">
    <text evidence="2">Belongs to the universal ribosomal protein uL1 family.</text>
</comment>